<name>Y335_CHLTR</name>
<organism>
    <name type="scientific">Chlamydia trachomatis serovar D (strain ATCC VR-885 / DSM 19411 / UW-3/Cx)</name>
    <dbReference type="NCBI Taxonomy" id="272561"/>
    <lineage>
        <taxon>Bacteria</taxon>
        <taxon>Pseudomonadati</taxon>
        <taxon>Chlamydiota</taxon>
        <taxon>Chlamydiia</taxon>
        <taxon>Chlamydiales</taxon>
        <taxon>Chlamydiaceae</taxon>
        <taxon>Chlamydia/Chlamydophila group</taxon>
        <taxon>Chlamydia</taxon>
    </lineage>
</organism>
<dbReference type="EMBL" id="AE001273">
    <property type="protein sequence ID" value="AAC67930.1"/>
    <property type="molecule type" value="Genomic_DNA"/>
</dbReference>
<dbReference type="PIR" id="B71528">
    <property type="entry name" value="B71528"/>
</dbReference>
<dbReference type="RefSeq" id="NP_219842.1">
    <property type="nucleotide sequence ID" value="NC_000117.1"/>
</dbReference>
<dbReference type="RefSeq" id="WP_009871685.1">
    <property type="nucleotide sequence ID" value="NC_000117.1"/>
</dbReference>
<dbReference type="SMR" id="O84339"/>
<dbReference type="FunCoup" id="O84339">
    <property type="interactions" value="127"/>
</dbReference>
<dbReference type="STRING" id="272561.CT_335"/>
<dbReference type="EnsemblBacteria" id="AAC67930">
    <property type="protein sequence ID" value="AAC67930"/>
    <property type="gene ID" value="CT_335"/>
</dbReference>
<dbReference type="GeneID" id="884784"/>
<dbReference type="KEGG" id="ctr:CT_335"/>
<dbReference type="PATRIC" id="fig|272561.5.peg.361"/>
<dbReference type="HOGENOM" id="CLU_140930_2_2_0"/>
<dbReference type="InParanoid" id="O84339"/>
<dbReference type="OrthoDB" id="19046at2"/>
<dbReference type="Proteomes" id="UP000000431">
    <property type="component" value="Chromosome"/>
</dbReference>
<dbReference type="GO" id="GO:0043590">
    <property type="term" value="C:bacterial nucleoid"/>
    <property type="evidence" value="ECO:0007669"/>
    <property type="project" value="UniProtKB-UniRule"/>
</dbReference>
<dbReference type="GO" id="GO:0005829">
    <property type="term" value="C:cytosol"/>
    <property type="evidence" value="ECO:0000318"/>
    <property type="project" value="GO_Central"/>
</dbReference>
<dbReference type="GO" id="GO:0003677">
    <property type="term" value="F:DNA binding"/>
    <property type="evidence" value="ECO:0000318"/>
    <property type="project" value="GO_Central"/>
</dbReference>
<dbReference type="FunFam" id="3.30.1310.10:FF:000009">
    <property type="entry name" value="Nucleoid-associated protein TC_0612"/>
    <property type="match status" value="1"/>
</dbReference>
<dbReference type="Gene3D" id="3.30.1310.10">
    <property type="entry name" value="Nucleoid-associated protein YbaB-like domain"/>
    <property type="match status" value="1"/>
</dbReference>
<dbReference type="HAMAP" id="MF_00274">
    <property type="entry name" value="DNA_YbaB_EbfC"/>
    <property type="match status" value="1"/>
</dbReference>
<dbReference type="InterPro" id="IPR036894">
    <property type="entry name" value="YbaB-like_sf"/>
</dbReference>
<dbReference type="InterPro" id="IPR004401">
    <property type="entry name" value="YbaB/EbfC"/>
</dbReference>
<dbReference type="NCBIfam" id="TIGR00103">
    <property type="entry name" value="DNA_YbaB_EbfC"/>
    <property type="match status" value="1"/>
</dbReference>
<dbReference type="PANTHER" id="PTHR33449">
    <property type="entry name" value="NUCLEOID-ASSOCIATED PROTEIN YBAB"/>
    <property type="match status" value="1"/>
</dbReference>
<dbReference type="PANTHER" id="PTHR33449:SF1">
    <property type="entry name" value="NUCLEOID-ASSOCIATED PROTEIN YBAB"/>
    <property type="match status" value="1"/>
</dbReference>
<dbReference type="Pfam" id="PF02575">
    <property type="entry name" value="YbaB_DNA_bd"/>
    <property type="match status" value="1"/>
</dbReference>
<dbReference type="PIRSF" id="PIRSF004555">
    <property type="entry name" value="UCP004555"/>
    <property type="match status" value="1"/>
</dbReference>
<dbReference type="SUPFAM" id="SSF82607">
    <property type="entry name" value="YbaB-like"/>
    <property type="match status" value="1"/>
</dbReference>
<sequence length="96" mass="10537">MGSGYAKKKKEAKLMERQFMEMEASLEQKRFSGEAGNGLVSVTINGKCDLVDVRIKPDCLDPEDPEVVADLFRAAFKAAKAALDSEMSAMQMGMPF</sequence>
<keyword id="KW-0963">Cytoplasm</keyword>
<keyword id="KW-0238">DNA-binding</keyword>
<keyword id="KW-1185">Reference proteome</keyword>
<protein>
    <recommendedName>
        <fullName evidence="1">Nucleoid-associated protein CT_335</fullName>
    </recommendedName>
</protein>
<comment type="function">
    <text evidence="1">Binds to DNA and alters its conformation. May be involved in regulation of gene expression, nucleoid organization and DNA protection.</text>
</comment>
<comment type="subunit">
    <text evidence="1">Homodimer.</text>
</comment>
<comment type="subcellular location">
    <subcellularLocation>
        <location evidence="1">Cytoplasm</location>
        <location evidence="1">Nucleoid</location>
    </subcellularLocation>
</comment>
<comment type="similarity">
    <text evidence="1">Belongs to the YbaB/EbfC family.</text>
</comment>
<feature type="chain" id="PRO_0000170382" description="Nucleoid-associated protein CT_335">
    <location>
        <begin position="1"/>
        <end position="96"/>
    </location>
</feature>
<reference key="1">
    <citation type="journal article" date="1998" name="Science">
        <title>Genome sequence of an obligate intracellular pathogen of humans: Chlamydia trachomatis.</title>
        <authorList>
            <person name="Stephens R.S."/>
            <person name="Kalman S."/>
            <person name="Lammel C.J."/>
            <person name="Fan J."/>
            <person name="Marathe R."/>
            <person name="Aravind L."/>
            <person name="Mitchell W.P."/>
            <person name="Olinger L."/>
            <person name="Tatusov R.L."/>
            <person name="Zhao Q."/>
            <person name="Koonin E.V."/>
            <person name="Davis R.W."/>
        </authorList>
    </citation>
    <scope>NUCLEOTIDE SEQUENCE [LARGE SCALE GENOMIC DNA]</scope>
    <source>
        <strain>ATCC VR-885 / DSM 19411 / UW-3/Cx</strain>
    </source>
</reference>
<gene>
    <name type="ordered locus">CT_335</name>
</gene>
<evidence type="ECO:0000255" key="1">
    <source>
        <dbReference type="HAMAP-Rule" id="MF_00274"/>
    </source>
</evidence>
<proteinExistence type="inferred from homology"/>
<accession>O84339</accession>